<sequence>MNFLYDISAVEIGQHFYWSLGGFQMHGQVLINSWIVLGLIIAFAVTTTRDLKPVPEGGQNLAEFVVEYIRDIAKTQVGHDYLEWTPFIGTLFLFIFVSNWSGALIPWKLIELPHGELGAPTNDINTTVALALLTSLTYFYAGLKKKGLEYFGKYVQPTPILLPINVLEDFTKPLSLSFRLFGNILADELVVAVLVSLVPLVIPIPLIFLGLFTSGIQALIFATLAGAYIGEALEGH</sequence>
<name>ATPI_OSTTA</name>
<dbReference type="EMBL" id="CR954199">
    <property type="protein sequence ID" value="CAL36369.1"/>
    <property type="molecule type" value="Genomic_DNA"/>
</dbReference>
<dbReference type="RefSeq" id="YP_717247.1">
    <property type="nucleotide sequence ID" value="NC_008289.1"/>
</dbReference>
<dbReference type="SMR" id="Q0P3K8"/>
<dbReference type="FunCoup" id="Q0P3K8">
    <property type="interactions" value="105"/>
</dbReference>
<dbReference type="STRING" id="70448.Q0P3K8"/>
<dbReference type="GeneID" id="4238812"/>
<dbReference type="KEGG" id="ota:OstapCp44"/>
<dbReference type="eggNOG" id="KOG4665">
    <property type="taxonomic scope" value="Eukaryota"/>
</dbReference>
<dbReference type="InParanoid" id="Q0P3K8"/>
<dbReference type="Proteomes" id="UP000009170">
    <property type="component" value="Chloroplast"/>
</dbReference>
<dbReference type="GO" id="GO:0009535">
    <property type="term" value="C:chloroplast thylakoid membrane"/>
    <property type="evidence" value="ECO:0007669"/>
    <property type="project" value="UniProtKB-SubCell"/>
</dbReference>
<dbReference type="GO" id="GO:0005886">
    <property type="term" value="C:plasma membrane"/>
    <property type="evidence" value="ECO:0007669"/>
    <property type="project" value="UniProtKB-UniRule"/>
</dbReference>
<dbReference type="GO" id="GO:0045259">
    <property type="term" value="C:proton-transporting ATP synthase complex"/>
    <property type="evidence" value="ECO:0007669"/>
    <property type="project" value="UniProtKB-KW"/>
</dbReference>
<dbReference type="GO" id="GO:0046933">
    <property type="term" value="F:proton-transporting ATP synthase activity, rotational mechanism"/>
    <property type="evidence" value="ECO:0007669"/>
    <property type="project" value="UniProtKB-UniRule"/>
</dbReference>
<dbReference type="CDD" id="cd00310">
    <property type="entry name" value="ATP-synt_Fo_a_6"/>
    <property type="match status" value="1"/>
</dbReference>
<dbReference type="FunFam" id="1.20.120.220:FF:000001">
    <property type="entry name" value="ATP synthase subunit a, chloroplastic"/>
    <property type="match status" value="1"/>
</dbReference>
<dbReference type="Gene3D" id="1.20.120.220">
    <property type="entry name" value="ATP synthase, F0 complex, subunit A"/>
    <property type="match status" value="1"/>
</dbReference>
<dbReference type="HAMAP" id="MF_01393">
    <property type="entry name" value="ATP_synth_a_bact"/>
    <property type="match status" value="1"/>
</dbReference>
<dbReference type="InterPro" id="IPR045082">
    <property type="entry name" value="ATP_syn_F0_a_bact/chloroplast"/>
</dbReference>
<dbReference type="InterPro" id="IPR000568">
    <property type="entry name" value="ATP_synth_F0_asu"/>
</dbReference>
<dbReference type="InterPro" id="IPR023011">
    <property type="entry name" value="ATP_synth_F0_asu_AS"/>
</dbReference>
<dbReference type="InterPro" id="IPR035908">
    <property type="entry name" value="F0_ATP_A_sf"/>
</dbReference>
<dbReference type="NCBIfam" id="TIGR01131">
    <property type="entry name" value="ATP_synt_6_or_A"/>
    <property type="match status" value="1"/>
</dbReference>
<dbReference type="PANTHER" id="PTHR42823">
    <property type="entry name" value="ATP SYNTHASE SUBUNIT A, CHLOROPLASTIC"/>
    <property type="match status" value="1"/>
</dbReference>
<dbReference type="PANTHER" id="PTHR42823:SF3">
    <property type="entry name" value="ATP SYNTHASE SUBUNIT A, CHLOROPLASTIC"/>
    <property type="match status" value="1"/>
</dbReference>
<dbReference type="Pfam" id="PF00119">
    <property type="entry name" value="ATP-synt_A"/>
    <property type="match status" value="1"/>
</dbReference>
<dbReference type="PRINTS" id="PR00123">
    <property type="entry name" value="ATPASEA"/>
</dbReference>
<dbReference type="SUPFAM" id="SSF81336">
    <property type="entry name" value="F1F0 ATP synthase subunit A"/>
    <property type="match status" value="1"/>
</dbReference>
<dbReference type="PROSITE" id="PS00449">
    <property type="entry name" value="ATPASE_A"/>
    <property type="match status" value="1"/>
</dbReference>
<gene>
    <name evidence="1" type="primary">atpI</name>
    <name type="ordered locus">OtCpg00440</name>
</gene>
<feature type="chain" id="PRO_0000361020" description="ATP synthase subunit a, chloroplastic">
    <location>
        <begin position="1"/>
        <end position="236"/>
    </location>
</feature>
<feature type="transmembrane region" description="Helical" evidence="1">
    <location>
        <begin position="25"/>
        <end position="45"/>
    </location>
</feature>
<feature type="transmembrane region" description="Helical" evidence="1">
    <location>
        <begin position="87"/>
        <end position="107"/>
    </location>
</feature>
<feature type="transmembrane region" description="Helical" evidence="1">
    <location>
        <begin position="123"/>
        <end position="143"/>
    </location>
</feature>
<feature type="transmembrane region" description="Helical" evidence="1">
    <location>
        <begin position="180"/>
        <end position="202"/>
    </location>
</feature>
<feature type="transmembrane region" description="Helical" evidence="1">
    <location>
        <begin position="210"/>
        <end position="230"/>
    </location>
</feature>
<keyword id="KW-0066">ATP synthesis</keyword>
<keyword id="KW-0138">CF(0)</keyword>
<keyword id="KW-0150">Chloroplast</keyword>
<keyword id="KW-0375">Hydrogen ion transport</keyword>
<keyword id="KW-0406">Ion transport</keyword>
<keyword id="KW-0472">Membrane</keyword>
<keyword id="KW-0934">Plastid</keyword>
<keyword id="KW-1185">Reference proteome</keyword>
<keyword id="KW-0793">Thylakoid</keyword>
<keyword id="KW-0812">Transmembrane</keyword>
<keyword id="KW-1133">Transmembrane helix</keyword>
<keyword id="KW-0813">Transport</keyword>
<protein>
    <recommendedName>
        <fullName evidence="1">ATP synthase subunit a, chloroplastic</fullName>
    </recommendedName>
    <alternativeName>
        <fullName evidence="1">ATP synthase F0 sector subunit a</fullName>
    </alternativeName>
    <alternativeName>
        <fullName evidence="1">F-ATPase subunit IV</fullName>
    </alternativeName>
</protein>
<geneLocation type="chloroplast"/>
<organism>
    <name type="scientific">Ostreococcus tauri</name>
    <dbReference type="NCBI Taxonomy" id="70448"/>
    <lineage>
        <taxon>Eukaryota</taxon>
        <taxon>Viridiplantae</taxon>
        <taxon>Chlorophyta</taxon>
        <taxon>Mamiellophyceae</taxon>
        <taxon>Mamiellales</taxon>
        <taxon>Bathycoccaceae</taxon>
        <taxon>Ostreococcus</taxon>
    </lineage>
</organism>
<accession>Q0P3K8</accession>
<proteinExistence type="inferred from homology"/>
<comment type="function">
    <text evidence="1">Key component of the proton channel; it plays a direct role in the translocation of protons across the membrane.</text>
</comment>
<comment type="subunit">
    <text evidence="1">F-type ATPases have 2 components, CF(1) - the catalytic core - and CF(0) - the membrane proton channel. CF(1) has five subunits: alpha(3), beta(3), gamma(1), delta(1), epsilon(1). CF(0) has four main subunits: a, b, b' and c.</text>
</comment>
<comment type="subcellular location">
    <subcellularLocation>
        <location evidence="1">Plastid</location>
        <location evidence="1">Chloroplast thylakoid membrane</location>
        <topology evidence="1">Multi-pass membrane protein</topology>
    </subcellularLocation>
</comment>
<comment type="similarity">
    <text evidence="1">Belongs to the ATPase A chain family.</text>
</comment>
<reference key="1">
    <citation type="journal article" date="2007" name="Mol. Biol. Evol.">
        <title>The complete chloroplast and mitochondrial DNA sequence of Ostreococcus tauri: organelle genomes of the smallest eukaryote are examples of compaction.</title>
        <authorList>
            <person name="Robbens S."/>
            <person name="Derelle E."/>
            <person name="Ferraz C."/>
            <person name="Wuyts J."/>
            <person name="Moreau H."/>
            <person name="Van de Peer Y."/>
        </authorList>
    </citation>
    <scope>NUCLEOTIDE SEQUENCE [LARGE SCALE GENOMIC DNA]</scope>
    <source>
        <strain>OTTH0595</strain>
    </source>
</reference>
<evidence type="ECO:0000255" key="1">
    <source>
        <dbReference type="HAMAP-Rule" id="MF_01393"/>
    </source>
</evidence>